<proteinExistence type="inferred from homology"/>
<protein>
    <recommendedName>
        <fullName evidence="1">Indole-3-glycerol phosphate synthase</fullName>
        <shortName evidence="1">IGPS</shortName>
        <ecNumber evidence="1">4.1.1.48</ecNumber>
    </recommendedName>
</protein>
<comment type="catalytic activity">
    <reaction evidence="1">
        <text>1-(2-carboxyphenylamino)-1-deoxy-D-ribulose 5-phosphate + H(+) = (1S,2R)-1-C-(indol-3-yl)glycerol 3-phosphate + CO2 + H2O</text>
        <dbReference type="Rhea" id="RHEA:23476"/>
        <dbReference type="ChEBI" id="CHEBI:15377"/>
        <dbReference type="ChEBI" id="CHEBI:15378"/>
        <dbReference type="ChEBI" id="CHEBI:16526"/>
        <dbReference type="ChEBI" id="CHEBI:58613"/>
        <dbReference type="ChEBI" id="CHEBI:58866"/>
        <dbReference type="EC" id="4.1.1.48"/>
    </reaction>
</comment>
<comment type="pathway">
    <text evidence="1">Amino-acid biosynthesis; L-tryptophan biosynthesis; L-tryptophan from chorismate: step 4/5.</text>
</comment>
<comment type="similarity">
    <text evidence="1">Belongs to the TrpC family.</text>
</comment>
<gene>
    <name evidence="1" type="primary">trpC</name>
    <name type="ordered locus">P9515_14581</name>
</gene>
<dbReference type="EC" id="4.1.1.48" evidence="1"/>
<dbReference type="EMBL" id="CP000552">
    <property type="protein sequence ID" value="ABM72665.1"/>
    <property type="molecule type" value="Genomic_DNA"/>
</dbReference>
<dbReference type="RefSeq" id="WP_011820762.1">
    <property type="nucleotide sequence ID" value="NC_008817.1"/>
</dbReference>
<dbReference type="SMR" id="A2BY04"/>
<dbReference type="STRING" id="167542.P9515_14581"/>
<dbReference type="GeneID" id="60200684"/>
<dbReference type="KEGG" id="pmc:P9515_14581"/>
<dbReference type="eggNOG" id="COG0134">
    <property type="taxonomic scope" value="Bacteria"/>
</dbReference>
<dbReference type="HOGENOM" id="CLU_034247_2_0_3"/>
<dbReference type="OrthoDB" id="9804217at2"/>
<dbReference type="UniPathway" id="UPA00035">
    <property type="reaction ID" value="UER00043"/>
</dbReference>
<dbReference type="Proteomes" id="UP000001589">
    <property type="component" value="Chromosome"/>
</dbReference>
<dbReference type="GO" id="GO:0004425">
    <property type="term" value="F:indole-3-glycerol-phosphate synthase activity"/>
    <property type="evidence" value="ECO:0007669"/>
    <property type="project" value="UniProtKB-UniRule"/>
</dbReference>
<dbReference type="GO" id="GO:0004640">
    <property type="term" value="F:phosphoribosylanthranilate isomerase activity"/>
    <property type="evidence" value="ECO:0007669"/>
    <property type="project" value="TreeGrafter"/>
</dbReference>
<dbReference type="GO" id="GO:0000162">
    <property type="term" value="P:L-tryptophan biosynthetic process"/>
    <property type="evidence" value="ECO:0007669"/>
    <property type="project" value="UniProtKB-UniRule"/>
</dbReference>
<dbReference type="CDD" id="cd00331">
    <property type="entry name" value="IGPS"/>
    <property type="match status" value="1"/>
</dbReference>
<dbReference type="FunFam" id="3.20.20.70:FF:000024">
    <property type="entry name" value="Indole-3-glycerol phosphate synthase"/>
    <property type="match status" value="1"/>
</dbReference>
<dbReference type="Gene3D" id="3.20.20.70">
    <property type="entry name" value="Aldolase class I"/>
    <property type="match status" value="1"/>
</dbReference>
<dbReference type="HAMAP" id="MF_00134_B">
    <property type="entry name" value="IGPS_B"/>
    <property type="match status" value="1"/>
</dbReference>
<dbReference type="InterPro" id="IPR013785">
    <property type="entry name" value="Aldolase_TIM"/>
</dbReference>
<dbReference type="InterPro" id="IPR045186">
    <property type="entry name" value="Indole-3-glycerol_P_synth"/>
</dbReference>
<dbReference type="InterPro" id="IPR013798">
    <property type="entry name" value="Indole-3-glycerol_P_synth_dom"/>
</dbReference>
<dbReference type="InterPro" id="IPR001468">
    <property type="entry name" value="Indole-3-GlycerolPSynthase_CS"/>
</dbReference>
<dbReference type="InterPro" id="IPR011060">
    <property type="entry name" value="RibuloseP-bd_barrel"/>
</dbReference>
<dbReference type="NCBIfam" id="NF001372">
    <property type="entry name" value="PRK00278.1-4"/>
    <property type="match status" value="1"/>
</dbReference>
<dbReference type="NCBIfam" id="NF001377">
    <property type="entry name" value="PRK00278.2-4"/>
    <property type="match status" value="1"/>
</dbReference>
<dbReference type="PANTHER" id="PTHR22854:SF2">
    <property type="entry name" value="INDOLE-3-GLYCEROL-PHOSPHATE SYNTHASE"/>
    <property type="match status" value="1"/>
</dbReference>
<dbReference type="PANTHER" id="PTHR22854">
    <property type="entry name" value="TRYPTOPHAN BIOSYNTHESIS PROTEIN"/>
    <property type="match status" value="1"/>
</dbReference>
<dbReference type="Pfam" id="PF00218">
    <property type="entry name" value="IGPS"/>
    <property type="match status" value="1"/>
</dbReference>
<dbReference type="SUPFAM" id="SSF51366">
    <property type="entry name" value="Ribulose-phoshate binding barrel"/>
    <property type="match status" value="1"/>
</dbReference>
<dbReference type="PROSITE" id="PS00614">
    <property type="entry name" value="IGPS"/>
    <property type="match status" value="1"/>
</dbReference>
<keyword id="KW-0028">Amino-acid biosynthesis</keyword>
<keyword id="KW-0057">Aromatic amino acid biosynthesis</keyword>
<keyword id="KW-0210">Decarboxylase</keyword>
<keyword id="KW-0456">Lyase</keyword>
<keyword id="KW-0822">Tryptophan biosynthesis</keyword>
<name>TRPC_PROM5</name>
<accession>A2BY04</accession>
<reference key="1">
    <citation type="journal article" date="2007" name="PLoS Genet.">
        <title>Patterns and implications of gene gain and loss in the evolution of Prochlorococcus.</title>
        <authorList>
            <person name="Kettler G.C."/>
            <person name="Martiny A.C."/>
            <person name="Huang K."/>
            <person name="Zucker J."/>
            <person name="Coleman M.L."/>
            <person name="Rodrigue S."/>
            <person name="Chen F."/>
            <person name="Lapidus A."/>
            <person name="Ferriera S."/>
            <person name="Johnson J."/>
            <person name="Steglich C."/>
            <person name="Church G.M."/>
            <person name="Richardson P."/>
            <person name="Chisholm S.W."/>
        </authorList>
    </citation>
    <scope>NUCLEOTIDE SEQUENCE [LARGE SCALE GENOMIC DNA]</scope>
    <source>
        <strain>MIT 9515</strain>
    </source>
</reference>
<evidence type="ECO:0000255" key="1">
    <source>
        <dbReference type="HAMAP-Rule" id="MF_00134"/>
    </source>
</evidence>
<sequence>MEIRRRPPNPTVRVENLEYAVPHREAKAKNILEEIVWYKDIEIKNFKKIVSLEDLIKKLDKLPPTKDFGKSILQSKIKPGVIAEIKKASPSKGVIREDFRPNEIAFSYERSGASCISVLTDKRFFQGSYEILQDVRGATNLPLLCKDFIISAYQIYKARVSGADAILLIAAILSDDDLFYLKKIADNLGMSVLVEVHDEQELKRILSFKLFDLIGINNRDLKTFKTDLKTSIEMMSKYSDIFSKHNIIPISESGINNSEELKKLVSIGIKGVLIGERFMRECDIEHSFKKLFKSI</sequence>
<organism>
    <name type="scientific">Prochlorococcus marinus (strain MIT 9515)</name>
    <dbReference type="NCBI Taxonomy" id="167542"/>
    <lineage>
        <taxon>Bacteria</taxon>
        <taxon>Bacillati</taxon>
        <taxon>Cyanobacteriota</taxon>
        <taxon>Cyanophyceae</taxon>
        <taxon>Synechococcales</taxon>
        <taxon>Prochlorococcaceae</taxon>
        <taxon>Prochlorococcus</taxon>
    </lineage>
</organism>
<feature type="chain" id="PRO_1000018522" description="Indole-3-glycerol phosphate synthase">
    <location>
        <begin position="1"/>
        <end position="295"/>
    </location>
</feature>